<keyword id="KW-0328">Glycosyltransferase</keyword>
<keyword id="KW-0808">Transferase</keyword>
<name>TYPH_LEGPN</name>
<sequence>MHDSFLSANGGFVVSKKTPHGLRLKHLGIKTYHEAIIYMREDCHVCHSEGFEVQTRIQVTLGSRSIIATLNVVTSELLQPGEAGLSDYAWESLHAKEGDEIQVSHPKPLESLSYVHAKIYGNELSFEQMKVIIDDVLSGRLSDVQISAFLAASGAGRLTRTEVMKLTKAMIDSGDRLSWPSPLVVDKHCVGGLPGNRTTLIVVPIVASFGLMIPKTSSRAITSPAGTADTMETLAPVHLSPQKMRQVVEQENGCIVWGGAVSLSPADDVLIRVERAIDLDSEGQLVASILSKKIATGATHAVIDIPVGPTAKVRNQSMALLLKQSLEEVGNELGLVVRALFTDGSQPVGHGIGPSLEARDVLAVLQGLPDAPNDLRERALTLAGAALECSSKVPPGLGKSIATQLLESGQAFKKFQAICEAQGGMRELTKARFTYPVVAAKEGKVSLIDNRKLAKIAKLAGAPKSKSAGIDLHAHVGESVEQGEPLFTIHSESLGELHYACDLLRDKQDIIILGENP</sequence>
<reference key="1">
    <citation type="journal article" date="2002" name="Infect. Immun.">
        <title>Macrophage-induced genes of Legionella pneumophila: protection from reactive intermediates and solute imbalance during intracellular growth.</title>
        <authorList>
            <person name="Rankin S."/>
            <person name="Li Z."/>
            <person name="Isberg R.R."/>
        </authorList>
    </citation>
    <scope>NUCLEOTIDE SEQUENCE [GENOMIC DNA]</scope>
</reference>
<organism>
    <name type="scientific">Legionella pneumophila</name>
    <dbReference type="NCBI Taxonomy" id="446"/>
    <lineage>
        <taxon>Bacteria</taxon>
        <taxon>Pseudomonadati</taxon>
        <taxon>Pseudomonadota</taxon>
        <taxon>Gammaproteobacteria</taxon>
        <taxon>Legionellales</taxon>
        <taxon>Legionellaceae</taxon>
        <taxon>Legionella</taxon>
    </lineage>
</organism>
<comment type="catalytic activity">
    <reaction evidence="1">
        <text>thymidine + phosphate = 2-deoxy-alpha-D-ribose 1-phosphate + thymine</text>
        <dbReference type="Rhea" id="RHEA:16037"/>
        <dbReference type="ChEBI" id="CHEBI:17748"/>
        <dbReference type="ChEBI" id="CHEBI:17821"/>
        <dbReference type="ChEBI" id="CHEBI:43474"/>
        <dbReference type="ChEBI" id="CHEBI:57259"/>
        <dbReference type="EC" id="2.4.2.4"/>
    </reaction>
</comment>
<comment type="similarity">
    <text evidence="1">Belongs to the thymidine/pyrimidine-nucleoside phosphorylase family. Type 2 subfamily.</text>
</comment>
<protein>
    <recommendedName>
        <fullName evidence="1">Putative thymidine phosphorylase</fullName>
        <ecNumber evidence="1">2.4.2.4</ecNumber>
    </recommendedName>
    <alternativeName>
        <fullName evidence="1">TdRPase</fullName>
    </alternativeName>
</protein>
<proteinExistence type="inferred from homology"/>
<accession>Q8RNP4</accession>
<feature type="chain" id="PRO_0000059095" description="Putative thymidine phosphorylase">
    <location>
        <begin position="1"/>
        <end position="517"/>
    </location>
</feature>
<dbReference type="EC" id="2.4.2.4" evidence="1"/>
<dbReference type="EMBL" id="AF480912">
    <property type="protein sequence ID" value="AAM00626.1"/>
    <property type="molecule type" value="Genomic_DNA"/>
</dbReference>
<dbReference type="SMR" id="Q8RNP4"/>
<dbReference type="STRING" id="91892.BIZ52_11590"/>
<dbReference type="eggNOG" id="COG0213">
    <property type="taxonomic scope" value="Bacteria"/>
</dbReference>
<dbReference type="GO" id="GO:0005829">
    <property type="term" value="C:cytosol"/>
    <property type="evidence" value="ECO:0007669"/>
    <property type="project" value="TreeGrafter"/>
</dbReference>
<dbReference type="GO" id="GO:0004645">
    <property type="term" value="F:1,4-alpha-oligoglucan phosphorylase activity"/>
    <property type="evidence" value="ECO:0007669"/>
    <property type="project" value="InterPro"/>
</dbReference>
<dbReference type="GO" id="GO:0009032">
    <property type="term" value="F:thymidine phosphorylase activity"/>
    <property type="evidence" value="ECO:0007669"/>
    <property type="project" value="UniProtKB-UniRule"/>
</dbReference>
<dbReference type="GO" id="GO:0006206">
    <property type="term" value="P:pyrimidine nucleobase metabolic process"/>
    <property type="evidence" value="ECO:0007669"/>
    <property type="project" value="InterPro"/>
</dbReference>
<dbReference type="GO" id="GO:0006213">
    <property type="term" value="P:pyrimidine nucleoside metabolic process"/>
    <property type="evidence" value="ECO:0007669"/>
    <property type="project" value="InterPro"/>
</dbReference>
<dbReference type="Gene3D" id="1.20.970.50">
    <property type="match status" value="1"/>
</dbReference>
<dbReference type="Gene3D" id="2.40.40.20">
    <property type="match status" value="1"/>
</dbReference>
<dbReference type="Gene3D" id="3.40.1030.10">
    <property type="entry name" value="Nucleoside phosphorylase/phosphoribosyltransferase catalytic domain"/>
    <property type="match status" value="1"/>
</dbReference>
<dbReference type="Gene3D" id="3.90.1170.30">
    <property type="entry name" value="Pyrimidine nucleoside phosphorylase-like, C-terminal domain"/>
    <property type="match status" value="1"/>
</dbReference>
<dbReference type="HAMAP" id="MF_00703">
    <property type="entry name" value="Thymid_phosp_2"/>
    <property type="match status" value="1"/>
</dbReference>
<dbReference type="InterPro" id="IPR000312">
    <property type="entry name" value="Glycosyl_Trfase_fam3"/>
</dbReference>
<dbReference type="InterPro" id="IPR017459">
    <property type="entry name" value="Glycosyl_Trfase_fam3_N_dom"/>
</dbReference>
<dbReference type="InterPro" id="IPR036320">
    <property type="entry name" value="Glycosyl_Trfase_fam3_N_dom_sf"/>
</dbReference>
<dbReference type="InterPro" id="IPR035902">
    <property type="entry name" value="Nuc_phospho_transferase"/>
</dbReference>
<dbReference type="InterPro" id="IPR036566">
    <property type="entry name" value="PYNP-like_C_sf"/>
</dbReference>
<dbReference type="InterPro" id="IPR013102">
    <property type="entry name" value="PYNP_C"/>
</dbReference>
<dbReference type="InterPro" id="IPR017872">
    <property type="entry name" value="Pyrmidine_PPase_CS"/>
</dbReference>
<dbReference type="InterPro" id="IPR028579">
    <property type="entry name" value="Thym_Pase_Put"/>
</dbReference>
<dbReference type="InterPro" id="IPR013466">
    <property type="entry name" value="Thymidine/AMP_Pase"/>
</dbReference>
<dbReference type="InterPro" id="IPR000053">
    <property type="entry name" value="Thymidine/pyrmidine_PPase"/>
</dbReference>
<dbReference type="NCBIfam" id="TIGR02645">
    <property type="entry name" value="ARCH_P_rylase"/>
    <property type="match status" value="1"/>
</dbReference>
<dbReference type="NCBIfam" id="NF003338">
    <property type="entry name" value="PRK04350.1"/>
    <property type="match status" value="1"/>
</dbReference>
<dbReference type="PANTHER" id="PTHR10515">
    <property type="entry name" value="THYMIDINE PHOSPHORYLASE"/>
    <property type="match status" value="1"/>
</dbReference>
<dbReference type="PANTHER" id="PTHR10515:SF0">
    <property type="entry name" value="THYMIDINE PHOSPHORYLASE"/>
    <property type="match status" value="1"/>
</dbReference>
<dbReference type="Pfam" id="PF02885">
    <property type="entry name" value="Glycos_trans_3N"/>
    <property type="match status" value="1"/>
</dbReference>
<dbReference type="Pfam" id="PF00591">
    <property type="entry name" value="Glycos_transf_3"/>
    <property type="match status" value="1"/>
</dbReference>
<dbReference type="Pfam" id="PF07831">
    <property type="entry name" value="PYNP_C"/>
    <property type="match status" value="1"/>
</dbReference>
<dbReference type="SMART" id="SM00941">
    <property type="entry name" value="PYNP_C"/>
    <property type="match status" value="1"/>
</dbReference>
<dbReference type="SUPFAM" id="SSF52418">
    <property type="entry name" value="Nucleoside phosphorylase/phosphoribosyltransferase catalytic domain"/>
    <property type="match status" value="1"/>
</dbReference>
<dbReference type="SUPFAM" id="SSF47648">
    <property type="entry name" value="Nucleoside phosphorylase/phosphoribosyltransferase N-terminal domain"/>
    <property type="match status" value="1"/>
</dbReference>
<dbReference type="SUPFAM" id="SSF54680">
    <property type="entry name" value="Pyrimidine nucleoside phosphorylase C-terminal domain"/>
    <property type="match status" value="1"/>
</dbReference>
<dbReference type="PROSITE" id="PS00647">
    <property type="entry name" value="THYMID_PHOSPHORYLASE"/>
    <property type="match status" value="1"/>
</dbReference>
<evidence type="ECO:0000255" key="1">
    <source>
        <dbReference type="HAMAP-Rule" id="MF_00703"/>
    </source>
</evidence>